<name>TAA7A_MOUSE</name>
<keyword id="KW-1003">Cell membrane</keyword>
<keyword id="KW-1015">Disulfide bond</keyword>
<keyword id="KW-0297">G-protein coupled receptor</keyword>
<keyword id="KW-0325">Glycoprotein</keyword>
<keyword id="KW-0472">Membrane</keyword>
<keyword id="KW-0675">Receptor</keyword>
<keyword id="KW-1185">Reference proteome</keyword>
<keyword id="KW-0807">Transducer</keyword>
<keyword id="KW-0812">Transmembrane</keyword>
<keyword id="KW-1133">Transmembrane helix</keyword>
<evidence type="ECO:0000250" key="1">
    <source>
        <dbReference type="UniProtKB" id="Q5QD04"/>
    </source>
</evidence>
<evidence type="ECO:0000250" key="2">
    <source>
        <dbReference type="UniProtKB" id="Q5QD09"/>
    </source>
</evidence>
<evidence type="ECO:0000250" key="3">
    <source>
        <dbReference type="UniProtKB" id="Q923X5"/>
    </source>
</evidence>
<evidence type="ECO:0000255" key="4"/>
<evidence type="ECO:0000255" key="5">
    <source>
        <dbReference type="PROSITE-ProRule" id="PRU00521"/>
    </source>
</evidence>
<evidence type="ECO:0000269" key="6">
    <source>
    </source>
</evidence>
<evidence type="ECO:0000269" key="7">
    <source>
    </source>
</evidence>
<evidence type="ECO:0000303" key="8">
    <source>
    </source>
</evidence>
<evidence type="ECO:0000303" key="9">
    <source>
    </source>
</evidence>
<evidence type="ECO:0000312" key="10">
    <source>
        <dbReference type="MGI" id="MGI:2685075"/>
    </source>
</evidence>
<proteinExistence type="evidence at transcript level"/>
<protein>
    <recommendedName>
        <fullName evidence="9">Trace amine-associated receptor 7a</fullName>
        <shortName evidence="8">TaR-7a</shortName>
        <shortName evidence="8">Trace amine receptor 7a</shortName>
        <shortName evidence="9">mTaar7a</shortName>
    </recommendedName>
</protein>
<feature type="chain" id="PRO_0000070162" description="Trace amine-associated receptor 7a">
    <location>
        <begin position="1"/>
        <end position="358"/>
    </location>
</feature>
<feature type="topological domain" description="Extracellular" evidence="4">
    <location>
        <begin position="1"/>
        <end position="47"/>
    </location>
</feature>
<feature type="transmembrane region" description="Helical; Name=1" evidence="4">
    <location>
        <begin position="48"/>
        <end position="68"/>
    </location>
</feature>
<feature type="topological domain" description="Cytoplasmic" evidence="4">
    <location>
        <begin position="69"/>
        <end position="83"/>
    </location>
</feature>
<feature type="transmembrane region" description="Helical; Name=2" evidence="4">
    <location>
        <begin position="84"/>
        <end position="104"/>
    </location>
</feature>
<feature type="topological domain" description="Extracellular" evidence="4">
    <location>
        <begin position="105"/>
        <end position="121"/>
    </location>
</feature>
<feature type="transmembrane region" description="Helical; Name=3" evidence="4">
    <location>
        <begin position="122"/>
        <end position="143"/>
    </location>
</feature>
<feature type="topological domain" description="Cytoplasmic" evidence="4">
    <location>
        <begin position="144"/>
        <end position="166"/>
    </location>
</feature>
<feature type="transmembrane region" description="Helical; Name=4" evidence="4">
    <location>
        <begin position="167"/>
        <end position="187"/>
    </location>
</feature>
<feature type="topological domain" description="Extracellular" evidence="4">
    <location>
        <begin position="188"/>
        <end position="212"/>
    </location>
</feature>
<feature type="transmembrane region" description="Helical; Name=5" evidence="4">
    <location>
        <begin position="213"/>
        <end position="233"/>
    </location>
</feature>
<feature type="topological domain" description="Cytoplasmic" evidence="4">
    <location>
        <begin position="234"/>
        <end position="274"/>
    </location>
</feature>
<feature type="transmembrane region" description="Helical; Name=6" evidence="4">
    <location>
        <begin position="275"/>
        <end position="295"/>
    </location>
</feature>
<feature type="topological domain" description="Extracellular" evidence="4">
    <location>
        <begin position="296"/>
        <end position="309"/>
    </location>
</feature>
<feature type="transmembrane region" description="Helical; Name=7" evidence="4">
    <location>
        <begin position="310"/>
        <end position="333"/>
    </location>
</feature>
<feature type="topological domain" description="Cytoplasmic" evidence="4">
    <location>
        <begin position="334"/>
        <end position="358"/>
    </location>
</feature>
<feature type="glycosylation site" description="N-linked (GlcNAc...) asparagine" evidence="4">
    <location>
        <position position="34"/>
    </location>
</feature>
<feature type="glycosylation site" description="N-linked (GlcNAc...) asparagine" evidence="4">
    <location>
        <position position="210"/>
    </location>
</feature>
<feature type="disulfide bond" evidence="1">
    <location>
        <begin position="37"/>
        <end position="201"/>
    </location>
</feature>
<feature type="disulfide bond" evidence="5">
    <location>
        <begin position="120"/>
        <end position="205"/>
    </location>
</feature>
<comment type="function">
    <text evidence="2">Olfactory receptor specific for N,N-dimethylalkylamines trace amines. Trace amine compounds are enriched in animal body fluids and act on trace amine-associated receptors (TAARs) to elicit both intraspecific and interspecific innate behaviors. Ligand-binding causes a conformation change that triggers signaling via G(s)-class of G alpha proteins (GNAL or GNAS).</text>
</comment>
<comment type="subcellular location">
    <subcellularLocation>
        <location evidence="3">Cell membrane</location>
        <topology evidence="4">Multi-pass membrane protein</topology>
    </subcellularLocation>
</comment>
<comment type="tissue specificity">
    <text evidence="6">Specifically expressed in neurons of the olfactory epithelium.</text>
</comment>
<comment type="domain">
    <text evidence="1">In addition to the well known disulfide bond common to G-protein coupled receptor 1 family, trace amine-associated receptors (TAARs) contain an unique disulfide bond (Cys-37-Cys-201) connecting the N-terminus to the extracellular Loop 2 (ECL2), which is required for agonist-induced receptor activation.</text>
</comment>
<comment type="disruption phenotype">
    <text evidence="7">Mice lacking Taar2, Taar3, Taar4, Taar5, Taar6, Taar7a, Taar7b, Taar7d, Taar7e, Taar7f, Taar8a, Taar8b, Taar8c and Taar9 show no visible phenotype or behavioral deficits. They however show an absence of aversion to low concentrations of amines such as 2-phenylethylamine, isopentylamine, N-methylpiperidine and cadaverine.</text>
</comment>
<comment type="similarity">
    <text evidence="5">Belongs to the G-protein coupled receptor 1 family.</text>
</comment>
<reference key="1">
    <citation type="journal article" date="2005" name="Genomics">
        <title>Trace amine-associated receptors form structurally and functionally distinct subfamilies of novel G protein-coupled receptors.</title>
        <authorList>
            <person name="Lindemann L."/>
            <person name="Ebeling M."/>
            <person name="Kratochwil N.A."/>
            <person name="Bunzow J.R."/>
            <person name="Grandy D.K."/>
            <person name="Hoener M.C."/>
        </authorList>
    </citation>
    <scope>NUCLEOTIDE SEQUENCE [GENOMIC DNA]</scope>
    <source>
        <strain>C57BL/6J</strain>
    </source>
</reference>
<reference key="2">
    <citation type="journal article" date="2006" name="Nature">
        <title>A second class of chemosensory receptors in the olfactory epithelium.</title>
        <authorList>
            <person name="Liberles S.D."/>
            <person name="Buck L.B."/>
        </authorList>
    </citation>
    <scope>TISSUE SPECIFICITY</scope>
</reference>
<reference key="3">
    <citation type="journal article" date="2013" name="Nature">
        <title>Non-redundant coding of aversive odours in the main olfactory pathway.</title>
        <authorList>
            <person name="Dewan A."/>
            <person name="Pacifico R."/>
            <person name="Zhan R."/>
            <person name="Rinberg D."/>
            <person name="Bozza T."/>
        </authorList>
    </citation>
    <scope>DISRUPTION PHENOTYPE</scope>
</reference>
<gene>
    <name evidence="9 10" type="primary">Taar7a</name>
    <name evidence="10" type="synonym">Gm229</name>
</gene>
<dbReference type="EMBL" id="AY702331">
    <property type="protein sequence ID" value="AAV70141.1"/>
    <property type="molecule type" value="Genomic_DNA"/>
</dbReference>
<dbReference type="CCDS" id="CCDS23740.1"/>
<dbReference type="RefSeq" id="NP_001010829.1">
    <property type="nucleotide sequence ID" value="NM_001010829.1"/>
</dbReference>
<dbReference type="SMR" id="Q5QD12"/>
<dbReference type="FunCoup" id="Q5QD12">
    <property type="interactions" value="592"/>
</dbReference>
<dbReference type="STRING" id="10090.ENSMUSP00000077616"/>
<dbReference type="GlyCosmos" id="Q5QD12">
    <property type="glycosylation" value="2 sites, No reported glycans"/>
</dbReference>
<dbReference type="GlyGen" id="Q5QD12">
    <property type="glycosylation" value="2 sites"/>
</dbReference>
<dbReference type="iPTMnet" id="Q5QD12"/>
<dbReference type="PhosphoSitePlus" id="Q5QD12"/>
<dbReference type="jPOST" id="Q5QD12"/>
<dbReference type="PaxDb" id="10090-ENSMUSP00000077616"/>
<dbReference type="DNASU" id="215856"/>
<dbReference type="Ensembl" id="ENSMUST00000078532.3">
    <property type="protein sequence ID" value="ENSMUSP00000077616.3"/>
    <property type="gene ID" value="ENSMUSG00000095647.2"/>
</dbReference>
<dbReference type="GeneID" id="215856"/>
<dbReference type="KEGG" id="mmu:215856"/>
<dbReference type="UCSC" id="uc007eqj.1">
    <property type="organism name" value="mouse"/>
</dbReference>
<dbReference type="AGR" id="MGI:2685075"/>
<dbReference type="CTD" id="215856"/>
<dbReference type="MGI" id="MGI:2685075">
    <property type="gene designation" value="Taar7a"/>
</dbReference>
<dbReference type="VEuPathDB" id="HostDB:ENSMUSG00000095647"/>
<dbReference type="eggNOG" id="KOG3656">
    <property type="taxonomic scope" value="Eukaryota"/>
</dbReference>
<dbReference type="GeneTree" id="ENSGT00940000160273"/>
<dbReference type="HOGENOM" id="CLU_009579_11_0_1"/>
<dbReference type="InParanoid" id="Q5QD12"/>
<dbReference type="OMA" id="SCIRTPY"/>
<dbReference type="OrthoDB" id="5959645at2759"/>
<dbReference type="PhylomeDB" id="Q5QD12"/>
<dbReference type="TreeFam" id="TF343107"/>
<dbReference type="BioGRID-ORCS" id="215856">
    <property type="hits" value="2 hits in 46 CRISPR screens"/>
</dbReference>
<dbReference type="PRO" id="PR:Q5QD12"/>
<dbReference type="Proteomes" id="UP000000589">
    <property type="component" value="Chromosome 10"/>
</dbReference>
<dbReference type="RNAct" id="Q5QD12">
    <property type="molecule type" value="protein"/>
</dbReference>
<dbReference type="Bgee" id="ENSMUSG00000095647">
    <property type="expression patterns" value="Expressed in septal olfactory organ and 2 other cell types or tissues"/>
</dbReference>
<dbReference type="GO" id="GO:0005886">
    <property type="term" value="C:plasma membrane"/>
    <property type="evidence" value="ECO:0007669"/>
    <property type="project" value="UniProtKB-SubCell"/>
</dbReference>
<dbReference type="GO" id="GO:0001594">
    <property type="term" value="F:trace-amine receptor activity"/>
    <property type="evidence" value="ECO:0007669"/>
    <property type="project" value="InterPro"/>
</dbReference>
<dbReference type="FunFam" id="1.20.1070.10:FF:000030">
    <property type="entry name" value="trace amine-associated receptor 1"/>
    <property type="match status" value="1"/>
</dbReference>
<dbReference type="Gene3D" id="1.20.1070.10">
    <property type="entry name" value="Rhodopsin 7-helix transmembrane proteins"/>
    <property type="match status" value="1"/>
</dbReference>
<dbReference type="InterPro" id="IPR000276">
    <property type="entry name" value="GPCR_Rhodpsn"/>
</dbReference>
<dbReference type="InterPro" id="IPR017452">
    <property type="entry name" value="GPCR_Rhodpsn_7TM"/>
</dbReference>
<dbReference type="InterPro" id="IPR050569">
    <property type="entry name" value="TAAR"/>
</dbReference>
<dbReference type="InterPro" id="IPR009132">
    <property type="entry name" value="TAAR_fam"/>
</dbReference>
<dbReference type="PANTHER" id="PTHR24249">
    <property type="entry name" value="HISTAMINE RECEPTOR-RELATED G-PROTEIN COUPLED RECEPTOR"/>
    <property type="match status" value="1"/>
</dbReference>
<dbReference type="PANTHER" id="PTHR24249:SF78">
    <property type="entry name" value="TRACE AMINE-ASSOCIATED RECEPTOR 7A-RELATED"/>
    <property type="match status" value="1"/>
</dbReference>
<dbReference type="Pfam" id="PF00001">
    <property type="entry name" value="7tm_1"/>
    <property type="match status" value="1"/>
</dbReference>
<dbReference type="PRINTS" id="PR00237">
    <property type="entry name" value="GPCRRHODOPSN"/>
</dbReference>
<dbReference type="PRINTS" id="PR01830">
    <property type="entry name" value="TRACEAMINER"/>
</dbReference>
<dbReference type="SMART" id="SM01381">
    <property type="entry name" value="7TM_GPCR_Srsx"/>
    <property type="match status" value="1"/>
</dbReference>
<dbReference type="SUPFAM" id="SSF81321">
    <property type="entry name" value="Family A G protein-coupled receptor-like"/>
    <property type="match status" value="1"/>
</dbReference>
<dbReference type="PROSITE" id="PS00237">
    <property type="entry name" value="G_PROTEIN_RECEP_F1_1"/>
    <property type="match status" value="1"/>
</dbReference>
<dbReference type="PROSITE" id="PS50262">
    <property type="entry name" value="G_PROTEIN_RECEP_F1_2"/>
    <property type="match status" value="1"/>
</dbReference>
<organism>
    <name type="scientific">Mus musculus</name>
    <name type="common">Mouse</name>
    <dbReference type="NCBI Taxonomy" id="10090"/>
    <lineage>
        <taxon>Eukaryota</taxon>
        <taxon>Metazoa</taxon>
        <taxon>Chordata</taxon>
        <taxon>Craniata</taxon>
        <taxon>Vertebrata</taxon>
        <taxon>Euteleostomi</taxon>
        <taxon>Mammalia</taxon>
        <taxon>Eutheria</taxon>
        <taxon>Euarchontoglires</taxon>
        <taxon>Glires</taxon>
        <taxon>Rodentia</taxon>
        <taxon>Myomorpha</taxon>
        <taxon>Muroidea</taxon>
        <taxon>Muridae</taxon>
        <taxon>Murinae</taxon>
        <taxon>Mus</taxon>
        <taxon>Mus</taxon>
    </lineage>
</organism>
<accession>Q5QD12</accession>
<sequence length="358" mass="40368">MDKLVDHFLSDQSRTMNEDLFSATSTELCYENLNRSCVRSPYSPGPRLILYAVFGFGAALAVCGNLLVMTSILHFRQLHSPANFLVASLACADFLVGLTVMPFSTVRSVEGCWYFGESYCKFHSCFEGSFCYSSIFHLCFISVDRYIAVSDPLTYPTRFTASVSGKCITFSWLLSIIYSFSLLYTGANEAGLEDLVSVLTCVGGCQIAVNQSWVFINFLLFLIPTLVMMTVYSKIFLIAKQQAQNIEKMSKQTARASESYKDRVAKRERKAAKTLGIAVAAFLLSWLPYFIDSIIDAFLGFITPTYVYEILVWIAYYNSAMNPLIYAFFYPWFRKAIKLIVTGKILRENSSTTNLFPE</sequence>